<accession>A7GYZ4</accession>
<sequence>MKNFALSCIKFYQNYISKILPKSCRYYPTCSEYAVWEFKNNDIFSALLATLARILRCNQLFKGGIDYPVIRKRFGSFSIFKRMEFSNIDFWFVPCKNSKFYVIKVLDSLKEKR</sequence>
<keyword id="KW-0997">Cell inner membrane</keyword>
<keyword id="KW-1003">Cell membrane</keyword>
<keyword id="KW-0472">Membrane</keyword>
<keyword id="KW-1185">Reference proteome</keyword>
<gene>
    <name type="ordered locus">Ccur92_11320</name>
    <name type="ORF">CCV52592_1830</name>
</gene>
<reference key="1">
    <citation type="submission" date="2007-07" db="EMBL/GenBank/DDBJ databases">
        <title>Genome sequence of Campylobacter curvus 525.92 isolated from human feces.</title>
        <authorList>
            <person name="Fouts D.E."/>
            <person name="Mongodin E.F."/>
            <person name="Puiu D."/>
            <person name="Sebastian Y."/>
            <person name="Miller W.G."/>
            <person name="Mandrell R.E."/>
            <person name="Lastovica A.J."/>
            <person name="Nelson K.E."/>
        </authorList>
    </citation>
    <scope>NUCLEOTIDE SEQUENCE [LARGE SCALE GENOMIC DNA]</scope>
    <source>
        <strain>525.92</strain>
    </source>
</reference>
<proteinExistence type="inferred from homology"/>
<name>YIDD_CAMC5</name>
<protein>
    <recommendedName>
        <fullName evidence="1">Putative membrane protein insertion efficiency factor</fullName>
    </recommendedName>
</protein>
<comment type="function">
    <text evidence="1">Could be involved in insertion of integral membrane proteins into the membrane.</text>
</comment>
<comment type="subcellular location">
    <subcellularLocation>
        <location evidence="1">Cell inner membrane</location>
        <topology evidence="1">Peripheral membrane protein</topology>
        <orientation evidence="1">Cytoplasmic side</orientation>
    </subcellularLocation>
</comment>
<comment type="similarity">
    <text evidence="1">Belongs to the UPF0161 family.</text>
</comment>
<feature type="chain" id="PRO_1000013077" description="Putative membrane protein insertion efficiency factor">
    <location>
        <begin position="1"/>
        <end position="113"/>
    </location>
</feature>
<organism>
    <name type="scientific">Campylobacter curvus (strain 525.92)</name>
    <dbReference type="NCBI Taxonomy" id="360105"/>
    <lineage>
        <taxon>Bacteria</taxon>
        <taxon>Pseudomonadati</taxon>
        <taxon>Campylobacterota</taxon>
        <taxon>Epsilonproteobacteria</taxon>
        <taxon>Campylobacterales</taxon>
        <taxon>Campylobacteraceae</taxon>
        <taxon>Campylobacter</taxon>
    </lineage>
</organism>
<dbReference type="EMBL" id="CP000767">
    <property type="protein sequence ID" value="EAU00277.1"/>
    <property type="molecule type" value="Genomic_DNA"/>
</dbReference>
<dbReference type="STRING" id="360105.CCV52592_1830"/>
<dbReference type="KEGG" id="ccv:CCV52592_1830"/>
<dbReference type="HOGENOM" id="CLU_144811_4_0_7"/>
<dbReference type="OrthoDB" id="9801753at2"/>
<dbReference type="Proteomes" id="UP000006380">
    <property type="component" value="Chromosome"/>
</dbReference>
<dbReference type="GO" id="GO:0005886">
    <property type="term" value="C:plasma membrane"/>
    <property type="evidence" value="ECO:0007669"/>
    <property type="project" value="UniProtKB-SubCell"/>
</dbReference>
<dbReference type="HAMAP" id="MF_00386">
    <property type="entry name" value="UPF0161_YidD"/>
    <property type="match status" value="1"/>
</dbReference>
<dbReference type="InterPro" id="IPR002696">
    <property type="entry name" value="Membr_insert_effic_factor_YidD"/>
</dbReference>
<dbReference type="NCBIfam" id="TIGR00278">
    <property type="entry name" value="membrane protein insertion efficiency factor YidD"/>
    <property type="match status" value="1"/>
</dbReference>
<dbReference type="PANTHER" id="PTHR33383">
    <property type="entry name" value="MEMBRANE PROTEIN INSERTION EFFICIENCY FACTOR-RELATED"/>
    <property type="match status" value="1"/>
</dbReference>
<dbReference type="PANTHER" id="PTHR33383:SF1">
    <property type="entry name" value="MEMBRANE PROTEIN INSERTION EFFICIENCY FACTOR-RELATED"/>
    <property type="match status" value="1"/>
</dbReference>
<dbReference type="Pfam" id="PF01809">
    <property type="entry name" value="YidD"/>
    <property type="match status" value="1"/>
</dbReference>
<dbReference type="SMART" id="SM01234">
    <property type="entry name" value="Haemolytic"/>
    <property type="match status" value="1"/>
</dbReference>
<evidence type="ECO:0000255" key="1">
    <source>
        <dbReference type="HAMAP-Rule" id="MF_00386"/>
    </source>
</evidence>